<reference key="1">
    <citation type="journal article" date="2003" name="Genome Res.">
        <title>Comparative genome analysis of Vibrio vulnificus, a marine pathogen.</title>
        <authorList>
            <person name="Chen C.-Y."/>
            <person name="Wu K.-M."/>
            <person name="Chang Y.-C."/>
            <person name="Chang C.-H."/>
            <person name="Tsai H.-C."/>
            <person name="Liao T.-L."/>
            <person name="Liu Y.-M."/>
            <person name="Chen H.-J."/>
            <person name="Shen A.B.-T."/>
            <person name="Li J.-C."/>
            <person name="Su T.-L."/>
            <person name="Shao C.-P."/>
            <person name="Lee C.-T."/>
            <person name="Hor L.-I."/>
            <person name="Tsai S.-F."/>
        </authorList>
    </citation>
    <scope>NUCLEOTIDE SEQUENCE [LARGE SCALE GENOMIC DNA]</scope>
    <source>
        <strain>YJ016</strain>
    </source>
</reference>
<keyword id="KW-0030">Aminoacyl-tRNA synthetase</keyword>
<keyword id="KW-0067">ATP-binding</keyword>
<keyword id="KW-0963">Cytoplasm</keyword>
<keyword id="KW-0436">Ligase</keyword>
<keyword id="KW-0547">Nucleotide-binding</keyword>
<keyword id="KW-0648">Protein biosynthesis</keyword>
<protein>
    <recommendedName>
        <fullName evidence="1">Arginine--tRNA ligase</fullName>
        <ecNumber evidence="1">6.1.1.19</ecNumber>
    </recommendedName>
    <alternativeName>
        <fullName evidence="1">Arginyl-tRNA synthetase</fullName>
        <shortName evidence="1">ArgRS</shortName>
    </alternativeName>
</protein>
<organism>
    <name type="scientific">Vibrio vulnificus (strain YJ016)</name>
    <dbReference type="NCBI Taxonomy" id="196600"/>
    <lineage>
        <taxon>Bacteria</taxon>
        <taxon>Pseudomonadati</taxon>
        <taxon>Pseudomonadota</taxon>
        <taxon>Gammaproteobacteria</taxon>
        <taxon>Vibrionales</taxon>
        <taxon>Vibrionaceae</taxon>
        <taxon>Vibrio</taxon>
    </lineage>
</organism>
<name>SYR_VIBVY</name>
<proteinExistence type="inferred from homology"/>
<sequence>MNIQALINDKVSQALEAAGAPTGSPAAVRQSAKPQFGDYQANGVMGVAKQLGTNPREFAQKVLDVLDLDGIASKTEIAGPGFINIFLSEEFLAKQAEAALADPRLGVASEEAQTIVADYSAPNVAKEMHVGHLRSTIIGDAVVRTLEFLGHKVIRANHIGDWGTQFGMLIANLERVQQESGEVSMELADLEGFYRESKKLYDEDEEFAVKARGYVVKLQSGDEFCAEMWKKLVDVTMIQNQRNYDRLNVSLSRDDVMGESMYNDMLPKIVADLKAQGLAVEDDGAQVVFLEEFKNKDGEPMGVIVQKRDGGFLYTTTDIACAKYRYEELGADRVLYFIDSRQHQHLMQAWTIVRKAGYVPESVSLEHHAFGMMLGKDGKPFKTRAGGTVRLADLLDEAEVRAAQLIESKNPELAEDEKKAIANTVAMAAVKYADLSKHRTTDYVFDWDNMLAFEGNTAPYMQYAYTRVASVFAKAGVSMDDLQGEIKITDEKEKALIAKLMQFEEAVQSVAREGQPHIMCSYLFELAGQFSSFYEACPILVAEDEAVKQSRLKLAALTAKTIKQGLSLLGIDTLERM</sequence>
<accession>Q7MMM3</accession>
<gene>
    <name evidence="1" type="primary">argS</name>
    <name type="ordered locus">VV1044</name>
</gene>
<comment type="catalytic activity">
    <reaction evidence="1">
        <text>tRNA(Arg) + L-arginine + ATP = L-arginyl-tRNA(Arg) + AMP + diphosphate</text>
        <dbReference type="Rhea" id="RHEA:20301"/>
        <dbReference type="Rhea" id="RHEA-COMP:9658"/>
        <dbReference type="Rhea" id="RHEA-COMP:9673"/>
        <dbReference type="ChEBI" id="CHEBI:30616"/>
        <dbReference type="ChEBI" id="CHEBI:32682"/>
        <dbReference type="ChEBI" id="CHEBI:33019"/>
        <dbReference type="ChEBI" id="CHEBI:78442"/>
        <dbReference type="ChEBI" id="CHEBI:78513"/>
        <dbReference type="ChEBI" id="CHEBI:456215"/>
        <dbReference type="EC" id="6.1.1.19"/>
    </reaction>
</comment>
<comment type="subunit">
    <text evidence="1">Monomer.</text>
</comment>
<comment type="subcellular location">
    <subcellularLocation>
        <location evidence="1">Cytoplasm</location>
    </subcellularLocation>
</comment>
<comment type="similarity">
    <text evidence="1">Belongs to the class-I aminoacyl-tRNA synthetase family.</text>
</comment>
<evidence type="ECO:0000255" key="1">
    <source>
        <dbReference type="HAMAP-Rule" id="MF_00123"/>
    </source>
</evidence>
<dbReference type="EC" id="6.1.1.19" evidence="1"/>
<dbReference type="EMBL" id="BA000037">
    <property type="protein sequence ID" value="BAC93808.1"/>
    <property type="molecule type" value="Genomic_DNA"/>
</dbReference>
<dbReference type="RefSeq" id="WP_011149802.1">
    <property type="nucleotide sequence ID" value="NC_005139.1"/>
</dbReference>
<dbReference type="SMR" id="Q7MMM3"/>
<dbReference type="STRING" id="672.VV93_v1c09670"/>
<dbReference type="KEGG" id="vvy:VV1044"/>
<dbReference type="PATRIC" id="fig|196600.6.peg.1041"/>
<dbReference type="eggNOG" id="COG0018">
    <property type="taxonomic scope" value="Bacteria"/>
</dbReference>
<dbReference type="HOGENOM" id="CLU_006406_5_1_6"/>
<dbReference type="Proteomes" id="UP000002675">
    <property type="component" value="Chromosome I"/>
</dbReference>
<dbReference type="GO" id="GO:0005737">
    <property type="term" value="C:cytoplasm"/>
    <property type="evidence" value="ECO:0007669"/>
    <property type="project" value="UniProtKB-SubCell"/>
</dbReference>
<dbReference type="GO" id="GO:0004814">
    <property type="term" value="F:arginine-tRNA ligase activity"/>
    <property type="evidence" value="ECO:0007669"/>
    <property type="project" value="UniProtKB-UniRule"/>
</dbReference>
<dbReference type="GO" id="GO:0005524">
    <property type="term" value="F:ATP binding"/>
    <property type="evidence" value="ECO:0007669"/>
    <property type="project" value="UniProtKB-UniRule"/>
</dbReference>
<dbReference type="GO" id="GO:0006420">
    <property type="term" value="P:arginyl-tRNA aminoacylation"/>
    <property type="evidence" value="ECO:0007669"/>
    <property type="project" value="UniProtKB-UniRule"/>
</dbReference>
<dbReference type="CDD" id="cd07956">
    <property type="entry name" value="Anticodon_Ia_Arg"/>
    <property type="match status" value="1"/>
</dbReference>
<dbReference type="CDD" id="cd00671">
    <property type="entry name" value="ArgRS_core"/>
    <property type="match status" value="1"/>
</dbReference>
<dbReference type="FunFam" id="1.10.730.10:FF:000001">
    <property type="entry name" value="Arginine--tRNA ligase"/>
    <property type="match status" value="1"/>
</dbReference>
<dbReference type="FunFam" id="3.40.50.620:FF:000030">
    <property type="entry name" value="Arginine--tRNA ligase"/>
    <property type="match status" value="1"/>
</dbReference>
<dbReference type="Gene3D" id="3.30.1360.70">
    <property type="entry name" value="Arginyl tRNA synthetase N-terminal domain"/>
    <property type="match status" value="1"/>
</dbReference>
<dbReference type="Gene3D" id="3.40.50.620">
    <property type="entry name" value="HUPs"/>
    <property type="match status" value="1"/>
</dbReference>
<dbReference type="Gene3D" id="1.10.730.10">
    <property type="entry name" value="Isoleucyl-tRNA Synthetase, Domain 1"/>
    <property type="match status" value="1"/>
</dbReference>
<dbReference type="HAMAP" id="MF_00123">
    <property type="entry name" value="Arg_tRNA_synth"/>
    <property type="match status" value="1"/>
</dbReference>
<dbReference type="InterPro" id="IPR001412">
    <property type="entry name" value="aa-tRNA-synth_I_CS"/>
</dbReference>
<dbReference type="InterPro" id="IPR001278">
    <property type="entry name" value="Arg-tRNA-ligase"/>
</dbReference>
<dbReference type="InterPro" id="IPR005148">
    <property type="entry name" value="Arg-tRNA-synth_N"/>
</dbReference>
<dbReference type="InterPro" id="IPR036695">
    <property type="entry name" value="Arg-tRNA-synth_N_sf"/>
</dbReference>
<dbReference type="InterPro" id="IPR035684">
    <property type="entry name" value="ArgRS_core"/>
</dbReference>
<dbReference type="InterPro" id="IPR008909">
    <property type="entry name" value="DALR_anticod-bd"/>
</dbReference>
<dbReference type="InterPro" id="IPR014729">
    <property type="entry name" value="Rossmann-like_a/b/a_fold"/>
</dbReference>
<dbReference type="InterPro" id="IPR009080">
    <property type="entry name" value="tRNAsynth_Ia_anticodon-bd"/>
</dbReference>
<dbReference type="NCBIfam" id="TIGR00456">
    <property type="entry name" value="argS"/>
    <property type="match status" value="1"/>
</dbReference>
<dbReference type="PANTHER" id="PTHR11956:SF5">
    <property type="entry name" value="ARGININE--TRNA LIGASE, CYTOPLASMIC"/>
    <property type="match status" value="1"/>
</dbReference>
<dbReference type="PANTHER" id="PTHR11956">
    <property type="entry name" value="ARGINYL-TRNA SYNTHETASE"/>
    <property type="match status" value="1"/>
</dbReference>
<dbReference type="Pfam" id="PF03485">
    <property type="entry name" value="Arg_tRNA_synt_N"/>
    <property type="match status" value="1"/>
</dbReference>
<dbReference type="Pfam" id="PF05746">
    <property type="entry name" value="DALR_1"/>
    <property type="match status" value="1"/>
</dbReference>
<dbReference type="Pfam" id="PF00750">
    <property type="entry name" value="tRNA-synt_1d"/>
    <property type="match status" value="1"/>
</dbReference>
<dbReference type="PRINTS" id="PR01038">
    <property type="entry name" value="TRNASYNTHARG"/>
</dbReference>
<dbReference type="SMART" id="SM01016">
    <property type="entry name" value="Arg_tRNA_synt_N"/>
    <property type="match status" value="1"/>
</dbReference>
<dbReference type="SMART" id="SM00836">
    <property type="entry name" value="DALR_1"/>
    <property type="match status" value="1"/>
</dbReference>
<dbReference type="SUPFAM" id="SSF47323">
    <property type="entry name" value="Anticodon-binding domain of a subclass of class I aminoacyl-tRNA synthetases"/>
    <property type="match status" value="1"/>
</dbReference>
<dbReference type="SUPFAM" id="SSF55190">
    <property type="entry name" value="Arginyl-tRNA synthetase (ArgRS), N-terminal 'additional' domain"/>
    <property type="match status" value="1"/>
</dbReference>
<dbReference type="SUPFAM" id="SSF52374">
    <property type="entry name" value="Nucleotidylyl transferase"/>
    <property type="match status" value="1"/>
</dbReference>
<dbReference type="PROSITE" id="PS00178">
    <property type="entry name" value="AA_TRNA_LIGASE_I"/>
    <property type="match status" value="1"/>
</dbReference>
<feature type="chain" id="PRO_0000151635" description="Arginine--tRNA ligase">
    <location>
        <begin position="1"/>
        <end position="577"/>
    </location>
</feature>
<feature type="short sequence motif" description="'HIGH' region">
    <location>
        <begin position="122"/>
        <end position="132"/>
    </location>
</feature>